<reference key="1">
    <citation type="journal article" date="1994" name="Curr. Genet.">
        <title>Identification and characterization of genes induced during sexual differentiation in Schizosaccharomyces pombe.</title>
        <authorList>
            <person name="Sato S."/>
            <person name="Suzuki H."/>
            <person name="Widyastuti U."/>
            <person name="Hotta Y."/>
            <person name="Tabata S."/>
        </authorList>
    </citation>
    <scope>NUCLEOTIDE SEQUENCE [MRNA]</scope>
</reference>
<reference key="2">
    <citation type="journal article" date="2002" name="Nature">
        <title>The genome sequence of Schizosaccharomyces pombe.</title>
        <authorList>
            <person name="Wood V."/>
            <person name="Gwilliam R."/>
            <person name="Rajandream M.A."/>
            <person name="Lyne M.H."/>
            <person name="Lyne R."/>
            <person name="Stewart A."/>
            <person name="Sgouros J.G."/>
            <person name="Peat N."/>
            <person name="Hayles J."/>
            <person name="Baker S.G."/>
            <person name="Basham D."/>
            <person name="Bowman S."/>
            <person name="Brooks K."/>
            <person name="Brown D."/>
            <person name="Brown S."/>
            <person name="Chillingworth T."/>
            <person name="Churcher C.M."/>
            <person name="Collins M."/>
            <person name="Connor R."/>
            <person name="Cronin A."/>
            <person name="Davis P."/>
            <person name="Feltwell T."/>
            <person name="Fraser A."/>
            <person name="Gentles S."/>
            <person name="Goble A."/>
            <person name="Hamlin N."/>
            <person name="Harris D.E."/>
            <person name="Hidalgo J."/>
            <person name="Hodgson G."/>
            <person name="Holroyd S."/>
            <person name="Hornsby T."/>
            <person name="Howarth S."/>
            <person name="Huckle E.J."/>
            <person name="Hunt S."/>
            <person name="Jagels K."/>
            <person name="James K.D."/>
            <person name="Jones L."/>
            <person name="Jones M."/>
            <person name="Leather S."/>
            <person name="McDonald S."/>
            <person name="McLean J."/>
            <person name="Mooney P."/>
            <person name="Moule S."/>
            <person name="Mungall K.L."/>
            <person name="Murphy L.D."/>
            <person name="Niblett D."/>
            <person name="Odell C."/>
            <person name="Oliver K."/>
            <person name="O'Neil S."/>
            <person name="Pearson D."/>
            <person name="Quail M.A."/>
            <person name="Rabbinowitsch E."/>
            <person name="Rutherford K.M."/>
            <person name="Rutter S."/>
            <person name="Saunders D."/>
            <person name="Seeger K."/>
            <person name="Sharp S."/>
            <person name="Skelton J."/>
            <person name="Simmonds M.N."/>
            <person name="Squares R."/>
            <person name="Squares S."/>
            <person name="Stevens K."/>
            <person name="Taylor K."/>
            <person name="Taylor R.G."/>
            <person name="Tivey A."/>
            <person name="Walsh S.V."/>
            <person name="Warren T."/>
            <person name="Whitehead S."/>
            <person name="Woodward J.R."/>
            <person name="Volckaert G."/>
            <person name="Aert R."/>
            <person name="Robben J."/>
            <person name="Grymonprez B."/>
            <person name="Weltjens I."/>
            <person name="Vanstreels E."/>
            <person name="Rieger M."/>
            <person name="Schaefer M."/>
            <person name="Mueller-Auer S."/>
            <person name="Gabel C."/>
            <person name="Fuchs M."/>
            <person name="Duesterhoeft A."/>
            <person name="Fritzc C."/>
            <person name="Holzer E."/>
            <person name="Moestl D."/>
            <person name="Hilbert H."/>
            <person name="Borzym K."/>
            <person name="Langer I."/>
            <person name="Beck A."/>
            <person name="Lehrach H."/>
            <person name="Reinhardt R."/>
            <person name="Pohl T.M."/>
            <person name="Eger P."/>
            <person name="Zimmermann W."/>
            <person name="Wedler H."/>
            <person name="Wambutt R."/>
            <person name="Purnelle B."/>
            <person name="Goffeau A."/>
            <person name="Cadieu E."/>
            <person name="Dreano S."/>
            <person name="Gloux S."/>
            <person name="Lelaure V."/>
            <person name="Mottier S."/>
            <person name="Galibert F."/>
            <person name="Aves S.J."/>
            <person name="Xiang Z."/>
            <person name="Hunt C."/>
            <person name="Moore K."/>
            <person name="Hurst S.M."/>
            <person name="Lucas M."/>
            <person name="Rochet M."/>
            <person name="Gaillardin C."/>
            <person name="Tallada V.A."/>
            <person name="Garzon A."/>
            <person name="Thode G."/>
            <person name="Daga R.R."/>
            <person name="Cruzado L."/>
            <person name="Jimenez J."/>
            <person name="Sanchez M."/>
            <person name="del Rey F."/>
            <person name="Benito J."/>
            <person name="Dominguez A."/>
            <person name="Revuelta J.L."/>
            <person name="Moreno S."/>
            <person name="Armstrong J."/>
            <person name="Forsburg S.L."/>
            <person name="Cerutti L."/>
            <person name="Lowe T."/>
            <person name="McCombie W.R."/>
            <person name="Paulsen I."/>
            <person name="Potashkin J."/>
            <person name="Shpakovski G.V."/>
            <person name="Ussery D."/>
            <person name="Barrell B.G."/>
            <person name="Nurse P."/>
        </authorList>
    </citation>
    <scope>NUCLEOTIDE SEQUENCE [LARGE SCALE GENOMIC DNA]</scope>
    <source>
        <strain>972 / ATCC 24843</strain>
    </source>
</reference>
<gene>
    <name type="primary">isp7</name>
    <name type="ORF">SPAC25B8.13c</name>
</gene>
<name>ISP7_SCHPO</name>
<dbReference type="EMBL" id="D14064">
    <property type="protein sequence ID" value="BAA03150.1"/>
    <property type="molecule type" value="mRNA"/>
</dbReference>
<dbReference type="EMBL" id="CU329670">
    <property type="protein sequence ID" value="CAB61779.1"/>
    <property type="molecule type" value="Genomic_DNA"/>
</dbReference>
<dbReference type="PIR" id="S45496">
    <property type="entry name" value="S45496"/>
</dbReference>
<dbReference type="RefSeq" id="NP_594473.1">
    <property type="nucleotide sequence ID" value="NM_001019902.2"/>
</dbReference>
<dbReference type="SMR" id="P40902"/>
<dbReference type="BioGRID" id="279178">
    <property type="interactions" value="8"/>
</dbReference>
<dbReference type="FunCoup" id="P40902">
    <property type="interactions" value="4"/>
</dbReference>
<dbReference type="STRING" id="284812.P40902"/>
<dbReference type="iPTMnet" id="P40902"/>
<dbReference type="PaxDb" id="4896-SPAC25B8.13c.1"/>
<dbReference type="EnsemblFungi" id="SPAC25B8.13c.1">
    <property type="protein sequence ID" value="SPAC25B8.13c.1:pep"/>
    <property type="gene ID" value="SPAC25B8.13c"/>
</dbReference>
<dbReference type="GeneID" id="2542728"/>
<dbReference type="KEGG" id="spo:2542728"/>
<dbReference type="PomBase" id="SPAC25B8.13c">
    <property type="gene designation" value="isp7"/>
</dbReference>
<dbReference type="VEuPathDB" id="FungiDB:SPAC25B8.13c"/>
<dbReference type="eggNOG" id="KOG0143">
    <property type="taxonomic scope" value="Eukaryota"/>
</dbReference>
<dbReference type="HOGENOM" id="CLU_010119_6_3_1"/>
<dbReference type="InParanoid" id="P40902"/>
<dbReference type="OMA" id="NNTWNRG"/>
<dbReference type="PhylomeDB" id="P40902"/>
<dbReference type="PRO" id="PR:P40902"/>
<dbReference type="Proteomes" id="UP000002485">
    <property type="component" value="Chromosome I"/>
</dbReference>
<dbReference type="GO" id="GO:0005829">
    <property type="term" value="C:cytosol"/>
    <property type="evidence" value="ECO:0007005"/>
    <property type="project" value="PomBase"/>
</dbReference>
<dbReference type="GO" id="GO:0005634">
    <property type="term" value="C:nucleus"/>
    <property type="evidence" value="ECO:0007005"/>
    <property type="project" value="PomBase"/>
</dbReference>
<dbReference type="GO" id="GO:0016706">
    <property type="term" value="F:2-oxoglutarate-dependent dioxygenase activity"/>
    <property type="evidence" value="ECO:0000318"/>
    <property type="project" value="GO_Central"/>
</dbReference>
<dbReference type="GO" id="GO:0031418">
    <property type="term" value="F:L-ascorbic acid binding"/>
    <property type="evidence" value="ECO:0007669"/>
    <property type="project" value="UniProtKB-KW"/>
</dbReference>
<dbReference type="GO" id="GO:0044283">
    <property type="term" value="P:small molecule biosynthetic process"/>
    <property type="evidence" value="ECO:0007669"/>
    <property type="project" value="UniProtKB-ARBA"/>
</dbReference>
<dbReference type="Gene3D" id="2.60.120.330">
    <property type="entry name" value="B-lactam Antibiotic, Isopenicillin N Synthase, Chain"/>
    <property type="match status" value="1"/>
</dbReference>
<dbReference type="InterPro" id="IPR026992">
    <property type="entry name" value="DIOX_N"/>
</dbReference>
<dbReference type="InterPro" id="IPR044861">
    <property type="entry name" value="IPNS-like_FE2OG_OXY"/>
</dbReference>
<dbReference type="InterPro" id="IPR027443">
    <property type="entry name" value="IPNS-like_sf"/>
</dbReference>
<dbReference type="InterPro" id="IPR050231">
    <property type="entry name" value="Iron_ascorbate_oxido_reductase"/>
</dbReference>
<dbReference type="InterPro" id="IPR005123">
    <property type="entry name" value="Oxoglu/Fe-dep_dioxygenase_dom"/>
</dbReference>
<dbReference type="PANTHER" id="PTHR47990">
    <property type="entry name" value="2-OXOGLUTARATE (2OG) AND FE(II)-DEPENDENT OXYGENASE SUPERFAMILY PROTEIN-RELATED"/>
    <property type="match status" value="1"/>
</dbReference>
<dbReference type="Pfam" id="PF03171">
    <property type="entry name" value="2OG-FeII_Oxy"/>
    <property type="match status" value="1"/>
</dbReference>
<dbReference type="Pfam" id="PF14226">
    <property type="entry name" value="DIOX_N"/>
    <property type="match status" value="1"/>
</dbReference>
<dbReference type="SUPFAM" id="SSF51197">
    <property type="entry name" value="Clavaminate synthase-like"/>
    <property type="match status" value="1"/>
</dbReference>
<dbReference type="PROSITE" id="PS51471">
    <property type="entry name" value="FE2OG_OXY"/>
    <property type="match status" value="1"/>
</dbReference>
<organism>
    <name type="scientific">Schizosaccharomyces pombe (strain 972 / ATCC 24843)</name>
    <name type="common">Fission yeast</name>
    <dbReference type="NCBI Taxonomy" id="284812"/>
    <lineage>
        <taxon>Eukaryota</taxon>
        <taxon>Fungi</taxon>
        <taxon>Dikarya</taxon>
        <taxon>Ascomycota</taxon>
        <taxon>Taphrinomycotina</taxon>
        <taxon>Schizosaccharomycetes</taxon>
        <taxon>Schizosaccharomycetales</taxon>
        <taxon>Schizosaccharomycetaceae</taxon>
        <taxon>Schizosaccharomyces</taxon>
    </lineage>
</organism>
<proteinExistence type="evidence at transcript level"/>
<keyword id="KW-0408">Iron</keyword>
<keyword id="KW-0560">Oxidoreductase</keyword>
<keyword id="KW-1185">Reference proteome</keyword>
<keyword id="KW-0847">Vitamin C</keyword>
<evidence type="ECO:0000255" key="1">
    <source>
        <dbReference type="PROSITE-ProRule" id="PRU00805"/>
    </source>
</evidence>
<evidence type="ECO:0000305" key="2"/>
<protein>
    <recommendedName>
        <fullName>Sexual differentiation process protein isp7</fullName>
    </recommendedName>
</protein>
<feature type="chain" id="PRO_0000067298" description="Sexual differentiation process protein isp7">
    <location>
        <begin position="1"/>
        <end position="397"/>
    </location>
</feature>
<feature type="domain" description="Fe2OG dioxygenase" evidence="1">
    <location>
        <begin position="255"/>
        <end position="353"/>
    </location>
</feature>
<sequence length="397" mass="43811">MLSQLIERSTQYVREASLEEQNRIMPLIDFGPYVNQEPGAHERIIQQLRAACESTGFFQIVNSPISPDVVKNAFRASKQFFELPFDEKLTLSKDMFSNRGYELMEDFVLEGEEDSSSPLEISGIDFEAGSYPGEAPLPPSSIGYVLPPSSLANGEGSSMFDADMTTSNAVAHGDESISNEFRESFYFGNDNLSKDRLLRPFQGPNKWPSTAGSSFRKALVKYHDQMLAFANHVMSLLAESLELSPDAFDEFCSDPTTSIRLLRYPSSPNRLGVQEHTDADALTLMSQDNVKGLEILDPVSNCFLSVSPAPGALIANLGDIMAILTNNRYKSSMHRVCNNSGSDRYTIPFFLQGNIDYVVAPLPGLGPSTAEPIAVEDLLRDHFQNSYTSHTTSLEVA</sequence>
<accession>P40902</accession>
<comment type="developmental stage">
    <text>Transcribed specifically during sexual development.</text>
</comment>
<comment type="similarity">
    <text evidence="2">Belongs to the iron/ascorbate-dependent oxidoreductase family.</text>
</comment>